<comment type="function">
    <text evidence="1">DNA-dependent RNA polymerase catalyzes the transcription of DNA into RNA using the four ribonucleoside triphosphates as substrates.</text>
</comment>
<comment type="catalytic activity">
    <reaction evidence="1">
        <text>RNA(n) + a ribonucleoside 5'-triphosphate = RNA(n+1) + diphosphate</text>
        <dbReference type="Rhea" id="RHEA:21248"/>
        <dbReference type="Rhea" id="RHEA-COMP:14527"/>
        <dbReference type="Rhea" id="RHEA-COMP:17342"/>
        <dbReference type="ChEBI" id="CHEBI:33019"/>
        <dbReference type="ChEBI" id="CHEBI:61557"/>
        <dbReference type="ChEBI" id="CHEBI:140395"/>
        <dbReference type="EC" id="2.7.7.6"/>
    </reaction>
</comment>
<comment type="cofactor">
    <cofactor evidence="1">
        <name>Mg(2+)</name>
        <dbReference type="ChEBI" id="CHEBI:18420"/>
    </cofactor>
    <text evidence="1">Binds 1 Mg(2+) ion per subunit.</text>
</comment>
<comment type="cofactor">
    <cofactor evidence="1">
        <name>Zn(2+)</name>
        <dbReference type="ChEBI" id="CHEBI:29105"/>
    </cofactor>
    <text evidence="1">Binds 2 Zn(2+) ions per subunit.</text>
</comment>
<comment type="subunit">
    <text evidence="1">The RNAP catalytic core consists of 2 alpha, 1 beta, 1 beta' and 1 omega subunit. When a sigma factor is associated with the core the holoenzyme is formed, which can initiate transcription.</text>
</comment>
<comment type="similarity">
    <text evidence="1">Belongs to the RNA polymerase beta' chain family.</text>
</comment>
<organism>
    <name type="scientific">Escherichia coli (strain SMS-3-5 / SECEC)</name>
    <dbReference type="NCBI Taxonomy" id="439855"/>
    <lineage>
        <taxon>Bacteria</taxon>
        <taxon>Pseudomonadati</taxon>
        <taxon>Pseudomonadota</taxon>
        <taxon>Gammaproteobacteria</taxon>
        <taxon>Enterobacterales</taxon>
        <taxon>Enterobacteriaceae</taxon>
        <taxon>Escherichia</taxon>
    </lineage>
</organism>
<sequence length="1407" mass="155174">MKDLLKFLKAQTKTEEFDAIKIALASPDMIRSWSFGEVKKPETINYRTFKPERDGLFCARIFGPVKDYECLCGKYKRLKHRGVICEKCGVEVTQTKVRRERMGHIELASPTAHIWFLKSLPSRIGLLLDMPLRDIERVLYFESYVVIEGGMTNLERQQILTEEQYLDALEEFGDEFDAKMGAEAIQALLKSMDLEQECEQLREELNETNSETKRKKLTKRIKLLEAFVQSGNKPEWMILTVLPVLPPDLRPLVPLDGGRFATSDLNDLYRRVINRNNRLKRLLDLAAPDIIVRNEKRMLQEAVDALLDNGRRGRAITGSNKRPLKSLADMIKGKQGRFRQNLLGKRVDYSGRSVITVGPYLRLHQCGLPKKMALELFKPFIYGKLELRGLATTIKAAKKMVEREEAVVWDILDEVIREHPVLLNRAPTLHRLGIQAFEPVLIEGKAIQLHPLVCAAYNADFDGDQMAVHVPLTLEAQLEARALMMSTNNILSPANGEPIIVPSQDVVLGLYYMTRDCVNAKGEGMVLTGPKEAERLYRSGLASLHARVKVRITEYEKDANGELVAKTSLKDTTVGRAILWMIVPKGLPYTIVNQALGKKAISKMLNTCYRILGLKPTVIFADQIMYTGFAYAARSGASVGIDDMVIPEKKHEIISEAEAEVAEIQEQFQSGLVTAGERYNKVIDIWAAANDRVSKAMMDNLQTETVINRDGQEEKQVSFNSIYMMADSGARGSAAQIRQLAGMRGLMAKPDGSIIETPITANFREGLNVLQYFISTHGARKGLADTALKTANSGYLTRRLVDVAQDLVVTEDDCGTHEGIMMTPVIEGGDVKEPLRDRVLGRVTAEDVLKPGTADILVPRNTLLHEQWCDLLEENSVDAVKVRSVVSCDTDFGVCAHCYGRDLARGHLINKGEAIGVIAAQSIGEPGTQLTMRTFHIGGAASRAAAESSIQVKNKGSIKLSNVKSVVNSSGKLVITSRNTELKLIDEFGRTKESYKVPYGAVLAKGDGEQVAGGETVANWDPHTMPVITEVSGFVRFTDMIDGQTITRQTDELTGLSSLVVLDSAERTAGGKDLRPALKIVDAQGNDVLIPGTDMPAQYFLPGKAIVQLEDGVQISSGDTLARIPQESGGTKDITGGLPRVADLFEARRPKEPAILAEISGIVSFGKETKGKRRLVITPVDGSDPYEEMIPKWRQLNVFEGERVERGDVISDGPEAPHDILRLRGVHAVTRYIVNEVQDVYRLQGVKINDKHIEVIVRQMLRKATIVNAGSSDFLEGEQVEYSRVKIANRELEANGKVGATYSRDLLGITKASLATESFISAASFQETTRVLTEAAVAGKRDELRGLKENVIVGRLIPAGTGYAYHQDRMRRRAAGEAPAAPQVTAEDASASLAELLNAGLGGSDNE</sequence>
<name>RPOC_ECOSM</name>
<keyword id="KW-0007">Acetylation</keyword>
<keyword id="KW-0240">DNA-directed RNA polymerase</keyword>
<keyword id="KW-0460">Magnesium</keyword>
<keyword id="KW-0479">Metal-binding</keyword>
<keyword id="KW-0548">Nucleotidyltransferase</keyword>
<keyword id="KW-0804">Transcription</keyword>
<keyword id="KW-0808">Transferase</keyword>
<keyword id="KW-0862">Zinc</keyword>
<protein>
    <recommendedName>
        <fullName evidence="1">DNA-directed RNA polymerase subunit beta'</fullName>
        <shortName evidence="1">RNAP subunit beta'</shortName>
        <ecNumber evidence="1">2.7.7.6</ecNumber>
    </recommendedName>
    <alternativeName>
        <fullName evidence="1">RNA polymerase subunit beta'</fullName>
    </alternativeName>
    <alternativeName>
        <fullName evidence="1">Transcriptase subunit beta'</fullName>
    </alternativeName>
</protein>
<gene>
    <name evidence="1" type="primary">rpoC</name>
    <name type="ordered locus">EcSMS35_4436</name>
</gene>
<accession>B1LNU0</accession>
<dbReference type="EC" id="2.7.7.6" evidence="1"/>
<dbReference type="EMBL" id="CP000970">
    <property type="protein sequence ID" value="ACB18570.1"/>
    <property type="molecule type" value="Genomic_DNA"/>
</dbReference>
<dbReference type="RefSeq" id="WP_000653953.1">
    <property type="nucleotide sequence ID" value="NC_010498.1"/>
</dbReference>
<dbReference type="SMR" id="B1LNU0"/>
<dbReference type="KEGG" id="ecm:EcSMS35_4436"/>
<dbReference type="HOGENOM" id="CLU_000524_3_1_6"/>
<dbReference type="Proteomes" id="UP000007011">
    <property type="component" value="Chromosome"/>
</dbReference>
<dbReference type="GO" id="GO:0000428">
    <property type="term" value="C:DNA-directed RNA polymerase complex"/>
    <property type="evidence" value="ECO:0007669"/>
    <property type="project" value="UniProtKB-KW"/>
</dbReference>
<dbReference type="GO" id="GO:0003677">
    <property type="term" value="F:DNA binding"/>
    <property type="evidence" value="ECO:0007669"/>
    <property type="project" value="UniProtKB-UniRule"/>
</dbReference>
<dbReference type="GO" id="GO:0003899">
    <property type="term" value="F:DNA-directed RNA polymerase activity"/>
    <property type="evidence" value="ECO:0007669"/>
    <property type="project" value="UniProtKB-UniRule"/>
</dbReference>
<dbReference type="GO" id="GO:0000287">
    <property type="term" value="F:magnesium ion binding"/>
    <property type="evidence" value="ECO:0007669"/>
    <property type="project" value="UniProtKB-UniRule"/>
</dbReference>
<dbReference type="GO" id="GO:0008270">
    <property type="term" value="F:zinc ion binding"/>
    <property type="evidence" value="ECO:0007669"/>
    <property type="project" value="UniProtKB-UniRule"/>
</dbReference>
<dbReference type="GO" id="GO:0006351">
    <property type="term" value="P:DNA-templated transcription"/>
    <property type="evidence" value="ECO:0007669"/>
    <property type="project" value="UniProtKB-UniRule"/>
</dbReference>
<dbReference type="CDD" id="cd02655">
    <property type="entry name" value="RNAP_beta'_C"/>
    <property type="match status" value="1"/>
</dbReference>
<dbReference type="CDD" id="cd01609">
    <property type="entry name" value="RNAP_beta'_N"/>
    <property type="match status" value="1"/>
</dbReference>
<dbReference type="FunFam" id="1.10.132.30:FF:000003">
    <property type="entry name" value="DNA-directed RNA polymerase subunit beta"/>
    <property type="match status" value="1"/>
</dbReference>
<dbReference type="FunFam" id="1.10.150.390:FF:000002">
    <property type="entry name" value="DNA-directed RNA polymerase subunit beta"/>
    <property type="match status" value="1"/>
</dbReference>
<dbReference type="FunFam" id="1.10.274.100:FF:000002">
    <property type="entry name" value="DNA-directed RNA polymerase subunit beta"/>
    <property type="match status" value="1"/>
</dbReference>
<dbReference type="FunFam" id="1.10.40.90:FF:000001">
    <property type="entry name" value="DNA-directed RNA polymerase subunit beta"/>
    <property type="match status" value="1"/>
</dbReference>
<dbReference type="FunFam" id="2.40.50.100:FF:000012">
    <property type="entry name" value="DNA-directed RNA polymerase subunit beta"/>
    <property type="match status" value="1"/>
</dbReference>
<dbReference type="FunFam" id="2.40.50.100:FF:000016">
    <property type="entry name" value="DNA-directed RNA polymerase subunit beta"/>
    <property type="match status" value="1"/>
</dbReference>
<dbReference type="FunFam" id="2.40.50.100:FF:000019">
    <property type="entry name" value="DNA-directed RNA polymerase subunit beta"/>
    <property type="match status" value="1"/>
</dbReference>
<dbReference type="FunFam" id="4.10.860.120:FF:000001">
    <property type="entry name" value="DNA-directed RNA polymerase subunit beta"/>
    <property type="match status" value="1"/>
</dbReference>
<dbReference type="Gene3D" id="1.10.132.30">
    <property type="match status" value="1"/>
</dbReference>
<dbReference type="Gene3D" id="1.10.150.390">
    <property type="match status" value="1"/>
</dbReference>
<dbReference type="Gene3D" id="1.10.1790.20">
    <property type="match status" value="1"/>
</dbReference>
<dbReference type="Gene3D" id="1.10.40.90">
    <property type="match status" value="1"/>
</dbReference>
<dbReference type="Gene3D" id="2.40.40.20">
    <property type="match status" value="1"/>
</dbReference>
<dbReference type="Gene3D" id="2.40.50.100">
    <property type="match status" value="3"/>
</dbReference>
<dbReference type="Gene3D" id="4.10.860.120">
    <property type="entry name" value="RNA polymerase II, clamp domain"/>
    <property type="match status" value="1"/>
</dbReference>
<dbReference type="Gene3D" id="1.10.274.100">
    <property type="entry name" value="RNA polymerase Rpb1, domain 3"/>
    <property type="match status" value="1"/>
</dbReference>
<dbReference type="HAMAP" id="MF_01322">
    <property type="entry name" value="RNApol_bact_RpoC"/>
    <property type="match status" value="1"/>
</dbReference>
<dbReference type="InterPro" id="IPR045867">
    <property type="entry name" value="DNA-dir_RpoC_beta_prime"/>
</dbReference>
<dbReference type="InterPro" id="IPR012754">
    <property type="entry name" value="DNA-dir_RpoC_beta_prime_bact"/>
</dbReference>
<dbReference type="InterPro" id="IPR000722">
    <property type="entry name" value="RNA_pol_asu"/>
</dbReference>
<dbReference type="InterPro" id="IPR006592">
    <property type="entry name" value="RNA_pol_N"/>
</dbReference>
<dbReference type="InterPro" id="IPR007080">
    <property type="entry name" value="RNA_pol_Rpb1_1"/>
</dbReference>
<dbReference type="InterPro" id="IPR007066">
    <property type="entry name" value="RNA_pol_Rpb1_3"/>
</dbReference>
<dbReference type="InterPro" id="IPR042102">
    <property type="entry name" value="RNA_pol_Rpb1_3_sf"/>
</dbReference>
<dbReference type="InterPro" id="IPR007083">
    <property type="entry name" value="RNA_pol_Rpb1_4"/>
</dbReference>
<dbReference type="InterPro" id="IPR007081">
    <property type="entry name" value="RNA_pol_Rpb1_5"/>
</dbReference>
<dbReference type="InterPro" id="IPR044893">
    <property type="entry name" value="RNA_pol_Rpb1_clamp_domain"/>
</dbReference>
<dbReference type="InterPro" id="IPR038120">
    <property type="entry name" value="Rpb1_funnel_sf"/>
</dbReference>
<dbReference type="NCBIfam" id="TIGR02386">
    <property type="entry name" value="rpoC_TIGR"/>
    <property type="match status" value="1"/>
</dbReference>
<dbReference type="PANTHER" id="PTHR19376">
    <property type="entry name" value="DNA-DIRECTED RNA POLYMERASE"/>
    <property type="match status" value="1"/>
</dbReference>
<dbReference type="PANTHER" id="PTHR19376:SF54">
    <property type="entry name" value="DNA-DIRECTED RNA POLYMERASE SUBUNIT BETA"/>
    <property type="match status" value="1"/>
</dbReference>
<dbReference type="Pfam" id="PF04997">
    <property type="entry name" value="RNA_pol_Rpb1_1"/>
    <property type="match status" value="1"/>
</dbReference>
<dbReference type="Pfam" id="PF00623">
    <property type="entry name" value="RNA_pol_Rpb1_2"/>
    <property type="match status" value="2"/>
</dbReference>
<dbReference type="Pfam" id="PF04983">
    <property type="entry name" value="RNA_pol_Rpb1_3"/>
    <property type="match status" value="1"/>
</dbReference>
<dbReference type="Pfam" id="PF05000">
    <property type="entry name" value="RNA_pol_Rpb1_4"/>
    <property type="match status" value="1"/>
</dbReference>
<dbReference type="Pfam" id="PF04998">
    <property type="entry name" value="RNA_pol_Rpb1_5"/>
    <property type="match status" value="1"/>
</dbReference>
<dbReference type="SMART" id="SM00663">
    <property type="entry name" value="RPOLA_N"/>
    <property type="match status" value="1"/>
</dbReference>
<dbReference type="SUPFAM" id="SSF64484">
    <property type="entry name" value="beta and beta-prime subunits of DNA dependent RNA-polymerase"/>
    <property type="match status" value="1"/>
</dbReference>
<feature type="chain" id="PRO_0000353357" description="DNA-directed RNA polymerase subunit beta'">
    <location>
        <begin position="1"/>
        <end position="1407"/>
    </location>
</feature>
<feature type="binding site" evidence="1">
    <location>
        <position position="70"/>
    </location>
    <ligand>
        <name>Zn(2+)</name>
        <dbReference type="ChEBI" id="CHEBI:29105"/>
        <label>1</label>
    </ligand>
</feature>
<feature type="binding site" evidence="1">
    <location>
        <position position="72"/>
    </location>
    <ligand>
        <name>Zn(2+)</name>
        <dbReference type="ChEBI" id="CHEBI:29105"/>
        <label>1</label>
    </ligand>
</feature>
<feature type="binding site" evidence="1">
    <location>
        <position position="85"/>
    </location>
    <ligand>
        <name>Zn(2+)</name>
        <dbReference type="ChEBI" id="CHEBI:29105"/>
        <label>1</label>
    </ligand>
</feature>
<feature type="binding site" evidence="1">
    <location>
        <position position="88"/>
    </location>
    <ligand>
        <name>Zn(2+)</name>
        <dbReference type="ChEBI" id="CHEBI:29105"/>
        <label>1</label>
    </ligand>
</feature>
<feature type="binding site" evidence="1">
    <location>
        <position position="460"/>
    </location>
    <ligand>
        <name>Mg(2+)</name>
        <dbReference type="ChEBI" id="CHEBI:18420"/>
    </ligand>
</feature>
<feature type="binding site" evidence="1">
    <location>
        <position position="462"/>
    </location>
    <ligand>
        <name>Mg(2+)</name>
        <dbReference type="ChEBI" id="CHEBI:18420"/>
    </ligand>
</feature>
<feature type="binding site" evidence="1">
    <location>
        <position position="464"/>
    </location>
    <ligand>
        <name>Mg(2+)</name>
        <dbReference type="ChEBI" id="CHEBI:18420"/>
    </ligand>
</feature>
<feature type="binding site" evidence="1">
    <location>
        <position position="814"/>
    </location>
    <ligand>
        <name>Zn(2+)</name>
        <dbReference type="ChEBI" id="CHEBI:29105"/>
        <label>2</label>
    </ligand>
</feature>
<feature type="binding site" evidence="1">
    <location>
        <position position="888"/>
    </location>
    <ligand>
        <name>Zn(2+)</name>
        <dbReference type="ChEBI" id="CHEBI:29105"/>
        <label>2</label>
    </ligand>
</feature>
<feature type="binding site" evidence="1">
    <location>
        <position position="895"/>
    </location>
    <ligand>
        <name>Zn(2+)</name>
        <dbReference type="ChEBI" id="CHEBI:29105"/>
        <label>2</label>
    </ligand>
</feature>
<feature type="binding site" evidence="1">
    <location>
        <position position="898"/>
    </location>
    <ligand>
        <name>Zn(2+)</name>
        <dbReference type="ChEBI" id="CHEBI:29105"/>
        <label>2</label>
    </ligand>
</feature>
<feature type="modified residue" description="N6-acetyllysine" evidence="1">
    <location>
        <position position="972"/>
    </location>
</feature>
<evidence type="ECO:0000255" key="1">
    <source>
        <dbReference type="HAMAP-Rule" id="MF_01322"/>
    </source>
</evidence>
<proteinExistence type="inferred from homology"/>
<reference key="1">
    <citation type="journal article" date="2008" name="J. Bacteriol.">
        <title>Insights into the environmental resistance gene pool from the genome sequence of the multidrug-resistant environmental isolate Escherichia coli SMS-3-5.</title>
        <authorList>
            <person name="Fricke W.F."/>
            <person name="Wright M.S."/>
            <person name="Lindell A.H."/>
            <person name="Harkins D.M."/>
            <person name="Baker-Austin C."/>
            <person name="Ravel J."/>
            <person name="Stepanauskas R."/>
        </authorList>
    </citation>
    <scope>NUCLEOTIDE SEQUENCE [LARGE SCALE GENOMIC DNA]</scope>
    <source>
        <strain>SMS-3-5 / SECEC</strain>
    </source>
</reference>